<keyword id="KW-0687">Ribonucleoprotein</keyword>
<keyword id="KW-0689">Ribosomal protein</keyword>
<keyword id="KW-0694">RNA-binding</keyword>
<keyword id="KW-0699">rRNA-binding</keyword>
<sequence>MSYTIAAQIRTEIGKGSSRRLRHANKVPAVIYGPGKEAISIVFDHKDIINIQANEDFYTTDLTISLDGKDVAVRVQDMQRHAFKPLIEHIDFKFA</sequence>
<gene>
    <name evidence="1" type="primary">rplY</name>
    <name type="ordered locus">swp_2792</name>
</gene>
<accession>B8CPE2</accession>
<feature type="chain" id="PRO_1000142597" description="Large ribosomal subunit protein bL25">
    <location>
        <begin position="1"/>
        <end position="95"/>
    </location>
</feature>
<comment type="function">
    <text evidence="1">This is one of the proteins that binds to the 5S RNA in the ribosome where it forms part of the central protuberance.</text>
</comment>
<comment type="subunit">
    <text evidence="1">Part of the 50S ribosomal subunit; part of the 5S rRNA/L5/L18/L25 subcomplex. Contacts the 5S rRNA. Binds to the 5S rRNA independently of L5 and L18.</text>
</comment>
<comment type="similarity">
    <text evidence="1">Belongs to the bacterial ribosomal protein bL25 family.</text>
</comment>
<organism>
    <name type="scientific">Shewanella piezotolerans (strain WP3 / JCM 13877)</name>
    <dbReference type="NCBI Taxonomy" id="225849"/>
    <lineage>
        <taxon>Bacteria</taxon>
        <taxon>Pseudomonadati</taxon>
        <taxon>Pseudomonadota</taxon>
        <taxon>Gammaproteobacteria</taxon>
        <taxon>Alteromonadales</taxon>
        <taxon>Shewanellaceae</taxon>
        <taxon>Shewanella</taxon>
    </lineage>
</organism>
<reference key="1">
    <citation type="journal article" date="2008" name="PLoS ONE">
        <title>Environmental adaptation: genomic analysis of the piezotolerant and psychrotolerant deep-sea iron reducing bacterium Shewanella piezotolerans WP3.</title>
        <authorList>
            <person name="Wang F."/>
            <person name="Wang J."/>
            <person name="Jian H."/>
            <person name="Zhang B."/>
            <person name="Li S."/>
            <person name="Wang F."/>
            <person name="Zeng X."/>
            <person name="Gao L."/>
            <person name="Bartlett D.H."/>
            <person name="Yu J."/>
            <person name="Hu S."/>
            <person name="Xiao X."/>
        </authorList>
    </citation>
    <scope>NUCLEOTIDE SEQUENCE [LARGE SCALE GENOMIC DNA]</scope>
    <source>
        <strain>WP3 / JCM 13877</strain>
    </source>
</reference>
<protein>
    <recommendedName>
        <fullName evidence="1">Large ribosomal subunit protein bL25</fullName>
    </recommendedName>
    <alternativeName>
        <fullName evidence="2">50S ribosomal protein L25</fullName>
    </alternativeName>
</protein>
<proteinExistence type="inferred from homology"/>
<evidence type="ECO:0000255" key="1">
    <source>
        <dbReference type="HAMAP-Rule" id="MF_01336"/>
    </source>
</evidence>
<evidence type="ECO:0000305" key="2"/>
<name>RL25_SHEPW</name>
<dbReference type="EMBL" id="CP000472">
    <property type="protein sequence ID" value="ACJ29518.1"/>
    <property type="molecule type" value="Genomic_DNA"/>
</dbReference>
<dbReference type="RefSeq" id="WP_020912872.1">
    <property type="nucleotide sequence ID" value="NC_011566.1"/>
</dbReference>
<dbReference type="SMR" id="B8CPE2"/>
<dbReference type="STRING" id="225849.swp_2792"/>
<dbReference type="KEGG" id="swp:swp_2792"/>
<dbReference type="eggNOG" id="COG1825">
    <property type="taxonomic scope" value="Bacteria"/>
</dbReference>
<dbReference type="HOGENOM" id="CLU_137946_0_0_6"/>
<dbReference type="OrthoDB" id="9806411at2"/>
<dbReference type="Proteomes" id="UP000000753">
    <property type="component" value="Chromosome"/>
</dbReference>
<dbReference type="GO" id="GO:0022625">
    <property type="term" value="C:cytosolic large ribosomal subunit"/>
    <property type="evidence" value="ECO:0007669"/>
    <property type="project" value="TreeGrafter"/>
</dbReference>
<dbReference type="GO" id="GO:0008097">
    <property type="term" value="F:5S rRNA binding"/>
    <property type="evidence" value="ECO:0007669"/>
    <property type="project" value="InterPro"/>
</dbReference>
<dbReference type="GO" id="GO:0003735">
    <property type="term" value="F:structural constituent of ribosome"/>
    <property type="evidence" value="ECO:0007669"/>
    <property type="project" value="InterPro"/>
</dbReference>
<dbReference type="GO" id="GO:0006412">
    <property type="term" value="P:translation"/>
    <property type="evidence" value="ECO:0007669"/>
    <property type="project" value="UniProtKB-UniRule"/>
</dbReference>
<dbReference type="CDD" id="cd00495">
    <property type="entry name" value="Ribosomal_L25_TL5_CTC"/>
    <property type="match status" value="1"/>
</dbReference>
<dbReference type="FunFam" id="2.40.240.10:FF:000002">
    <property type="entry name" value="50S ribosomal protein L25"/>
    <property type="match status" value="1"/>
</dbReference>
<dbReference type="Gene3D" id="2.40.240.10">
    <property type="entry name" value="Ribosomal Protein L25, Chain P"/>
    <property type="match status" value="1"/>
</dbReference>
<dbReference type="HAMAP" id="MF_01336">
    <property type="entry name" value="Ribosomal_bL25"/>
    <property type="match status" value="1"/>
</dbReference>
<dbReference type="InterPro" id="IPR020056">
    <property type="entry name" value="Rbsml_bL25/Gln-tRNA_synth_N"/>
</dbReference>
<dbReference type="InterPro" id="IPR011035">
    <property type="entry name" value="Ribosomal_bL25/Gln-tRNA_synth"/>
</dbReference>
<dbReference type="InterPro" id="IPR020055">
    <property type="entry name" value="Ribosomal_bL25_short"/>
</dbReference>
<dbReference type="InterPro" id="IPR029751">
    <property type="entry name" value="Ribosomal_L25_dom"/>
</dbReference>
<dbReference type="InterPro" id="IPR020930">
    <property type="entry name" value="Ribosomal_uL5_bac-type"/>
</dbReference>
<dbReference type="NCBIfam" id="NF004612">
    <property type="entry name" value="PRK05943.1"/>
    <property type="match status" value="1"/>
</dbReference>
<dbReference type="PANTHER" id="PTHR33284">
    <property type="entry name" value="RIBOSOMAL PROTEIN L25/GLN-TRNA SYNTHETASE, ANTI-CODON-BINDING DOMAIN-CONTAINING PROTEIN"/>
    <property type="match status" value="1"/>
</dbReference>
<dbReference type="PANTHER" id="PTHR33284:SF1">
    <property type="entry name" value="RIBOSOMAL PROTEIN L25_GLN-TRNA SYNTHETASE, ANTI-CODON-BINDING DOMAIN-CONTAINING PROTEIN"/>
    <property type="match status" value="1"/>
</dbReference>
<dbReference type="Pfam" id="PF01386">
    <property type="entry name" value="Ribosomal_L25p"/>
    <property type="match status" value="1"/>
</dbReference>
<dbReference type="SUPFAM" id="SSF50715">
    <property type="entry name" value="Ribosomal protein L25-like"/>
    <property type="match status" value="1"/>
</dbReference>